<reference key="1">
    <citation type="journal article" date="1995" name="Gene">
        <title>Sequence analysis, distribution and expression of an aminopeptidase N-encoding gene from Lactobacillus helveticus CNRZ32.</title>
        <authorList>
            <person name="Christensen J.E."/>
            <person name="Lin D.-L."/>
            <person name="Palva A."/>
            <person name="Steele J.L."/>
        </authorList>
    </citation>
    <scope>NUCLEOTIDE SEQUENCE [GENOMIC DNA]</scope>
    <source>
        <strain>CNRZ 32</strain>
    </source>
</reference>
<reference key="2">
    <citation type="journal article" date="1994" name="FEMS Microbiol. Lett.">
        <title>Characterization and expression of the pepN gene encoding a general aminopeptidase from Lactobacillus helveticus.</title>
        <authorList>
            <person name="Varmanen P."/>
            <person name="Vesanto E."/>
            <person name="Steele J.L."/>
            <person name="Palva A."/>
        </authorList>
    </citation>
    <scope>NUCLEOTIDE SEQUENCE [GENOMIC DNA]</scope>
    <source>
        <strain>53/7</strain>
    </source>
</reference>
<feature type="chain" id="PRO_0000095072" description="Aminopeptidase N">
    <location>
        <begin position="1"/>
        <end position="844"/>
    </location>
</feature>
<feature type="active site" description="Proton acceptor" evidence="2">
    <location>
        <position position="290"/>
    </location>
</feature>
<feature type="binding site" evidence="1">
    <location>
        <position position="120"/>
    </location>
    <ligand>
        <name>substrate</name>
    </ligand>
</feature>
<feature type="binding site" evidence="1">
    <location>
        <begin position="253"/>
        <end position="257"/>
    </location>
    <ligand>
        <name>substrate</name>
    </ligand>
</feature>
<feature type="binding site" evidence="2">
    <location>
        <position position="289"/>
    </location>
    <ligand>
        <name>Zn(2+)</name>
        <dbReference type="ChEBI" id="CHEBI:29105"/>
        <note>catalytic</note>
    </ligand>
</feature>
<feature type="binding site" evidence="2">
    <location>
        <position position="293"/>
    </location>
    <ligand>
        <name>Zn(2+)</name>
        <dbReference type="ChEBI" id="CHEBI:29105"/>
        <note>catalytic</note>
    </ligand>
</feature>
<feature type="binding site" evidence="2">
    <location>
        <position position="312"/>
    </location>
    <ligand>
        <name>Zn(2+)</name>
        <dbReference type="ChEBI" id="CHEBI:29105"/>
        <note>catalytic</note>
    </ligand>
</feature>
<feature type="site" description="Transition state stabilizer" evidence="1">
    <location>
        <position position="376"/>
    </location>
</feature>
<feature type="sequence variant" description="In strain: 53/7.">
    <original>F</original>
    <variation>I</variation>
    <location>
        <position position="39"/>
    </location>
</feature>
<feature type="sequence variant" description="In strain: 53/7.">
    <original>L</original>
    <variation>F</variation>
    <location>
        <position position="44"/>
    </location>
</feature>
<feature type="sequence variant" description="In strain: 53/7.">
    <original>S</original>
    <variation>A</variation>
    <location>
        <position position="342"/>
    </location>
</feature>
<feature type="sequence variant" description="In strain: 53/7.">
    <original>K</original>
    <variation>R</variation>
    <location>
        <position position="455"/>
    </location>
</feature>
<feature type="sequence variant" description="In strain: 53/7.">
    <original>S</original>
    <variation>N</variation>
    <location>
        <position position="496"/>
    </location>
</feature>
<feature type="sequence variant" description="In strain: 53/7.">
    <original>H</original>
    <variation>L</variation>
    <location>
        <position position="527"/>
    </location>
</feature>
<accession>Q10730</accession>
<gene>
    <name type="primary">pepN</name>
</gene>
<dbReference type="EC" id="3.4.11.2"/>
<dbReference type="EMBL" id="U08224">
    <property type="protein sequence ID" value="AAA81951.1"/>
    <property type="molecule type" value="Genomic_DNA"/>
</dbReference>
<dbReference type="EMBL" id="Z30323">
    <property type="protein sequence ID" value="CAA82978.1"/>
    <property type="molecule type" value="Genomic_DNA"/>
</dbReference>
<dbReference type="PIR" id="JC4054">
    <property type="entry name" value="JC4054"/>
</dbReference>
<dbReference type="PIR" id="S47274">
    <property type="entry name" value="S47274"/>
</dbReference>
<dbReference type="SMR" id="Q10730"/>
<dbReference type="MEROPS" id="M01.002"/>
<dbReference type="eggNOG" id="COG0308">
    <property type="taxonomic scope" value="Bacteria"/>
</dbReference>
<dbReference type="GO" id="GO:0005737">
    <property type="term" value="C:cytoplasm"/>
    <property type="evidence" value="ECO:0007669"/>
    <property type="project" value="UniProtKB-SubCell"/>
</dbReference>
<dbReference type="GO" id="GO:0005615">
    <property type="term" value="C:extracellular space"/>
    <property type="evidence" value="ECO:0007669"/>
    <property type="project" value="TreeGrafter"/>
</dbReference>
<dbReference type="GO" id="GO:0016020">
    <property type="term" value="C:membrane"/>
    <property type="evidence" value="ECO:0007669"/>
    <property type="project" value="TreeGrafter"/>
</dbReference>
<dbReference type="GO" id="GO:0016285">
    <property type="term" value="F:alanyl aminopeptidase activity"/>
    <property type="evidence" value="ECO:0007669"/>
    <property type="project" value="UniProtKB-EC"/>
</dbReference>
<dbReference type="GO" id="GO:0070006">
    <property type="term" value="F:metalloaminopeptidase activity"/>
    <property type="evidence" value="ECO:0007669"/>
    <property type="project" value="TreeGrafter"/>
</dbReference>
<dbReference type="GO" id="GO:0042277">
    <property type="term" value="F:peptide binding"/>
    <property type="evidence" value="ECO:0007669"/>
    <property type="project" value="TreeGrafter"/>
</dbReference>
<dbReference type="GO" id="GO:0008270">
    <property type="term" value="F:zinc ion binding"/>
    <property type="evidence" value="ECO:0007669"/>
    <property type="project" value="InterPro"/>
</dbReference>
<dbReference type="GO" id="GO:0043171">
    <property type="term" value="P:peptide catabolic process"/>
    <property type="evidence" value="ECO:0007669"/>
    <property type="project" value="TreeGrafter"/>
</dbReference>
<dbReference type="GO" id="GO:0006508">
    <property type="term" value="P:proteolysis"/>
    <property type="evidence" value="ECO:0007669"/>
    <property type="project" value="UniProtKB-KW"/>
</dbReference>
<dbReference type="CDD" id="cd09601">
    <property type="entry name" value="M1_APN-Q_like"/>
    <property type="match status" value="1"/>
</dbReference>
<dbReference type="FunFam" id="1.10.390.10:FF:000013">
    <property type="entry name" value="Aminopeptidase N"/>
    <property type="match status" value="1"/>
</dbReference>
<dbReference type="Gene3D" id="1.25.50.20">
    <property type="match status" value="1"/>
</dbReference>
<dbReference type="Gene3D" id="1.10.390.10">
    <property type="entry name" value="Neutral Protease Domain 2"/>
    <property type="match status" value="1"/>
</dbReference>
<dbReference type="Gene3D" id="2.60.40.1730">
    <property type="entry name" value="tricorn interacting facor f3 domain"/>
    <property type="match status" value="1"/>
</dbReference>
<dbReference type="InterPro" id="IPR045357">
    <property type="entry name" value="Aminopeptidase_N-like_N"/>
</dbReference>
<dbReference type="InterPro" id="IPR042097">
    <property type="entry name" value="Aminopeptidase_N-like_N_sf"/>
</dbReference>
<dbReference type="InterPro" id="IPR024571">
    <property type="entry name" value="ERAP1-like_C_dom"/>
</dbReference>
<dbReference type="InterPro" id="IPR034016">
    <property type="entry name" value="M1_APN-typ"/>
</dbReference>
<dbReference type="InterPro" id="IPR001930">
    <property type="entry name" value="Peptidase_M1"/>
</dbReference>
<dbReference type="InterPro" id="IPR050344">
    <property type="entry name" value="Peptidase_M1_aminopeptidases"/>
</dbReference>
<dbReference type="InterPro" id="IPR014782">
    <property type="entry name" value="Peptidase_M1_dom"/>
</dbReference>
<dbReference type="InterPro" id="IPR027268">
    <property type="entry name" value="Peptidase_M4/M1_CTD_sf"/>
</dbReference>
<dbReference type="PANTHER" id="PTHR11533">
    <property type="entry name" value="PROTEASE M1 ZINC METALLOPROTEASE"/>
    <property type="match status" value="1"/>
</dbReference>
<dbReference type="PANTHER" id="PTHR11533:SF174">
    <property type="entry name" value="PUROMYCIN-SENSITIVE AMINOPEPTIDASE-RELATED"/>
    <property type="match status" value="1"/>
</dbReference>
<dbReference type="Pfam" id="PF11838">
    <property type="entry name" value="ERAP1_C"/>
    <property type="match status" value="1"/>
</dbReference>
<dbReference type="Pfam" id="PF01433">
    <property type="entry name" value="Peptidase_M1"/>
    <property type="match status" value="1"/>
</dbReference>
<dbReference type="Pfam" id="PF17900">
    <property type="entry name" value="Peptidase_M1_N"/>
    <property type="match status" value="1"/>
</dbReference>
<dbReference type="PRINTS" id="PR00756">
    <property type="entry name" value="ALADIPTASE"/>
</dbReference>
<dbReference type="SUPFAM" id="SSF63737">
    <property type="entry name" value="Leukotriene A4 hydrolase N-terminal domain"/>
    <property type="match status" value="1"/>
</dbReference>
<dbReference type="SUPFAM" id="SSF55486">
    <property type="entry name" value="Metalloproteases ('zincins'), catalytic domain"/>
    <property type="match status" value="1"/>
</dbReference>
<dbReference type="PROSITE" id="PS00142">
    <property type="entry name" value="ZINC_PROTEASE"/>
    <property type="match status" value="1"/>
</dbReference>
<name>AMPN_LACHE</name>
<comment type="function">
    <text evidence="1">Aminopeptidase N is involved in the degradation of intracellular peptides generated by protein breakdown during normal growth as well as in response to nutrient starvation.</text>
</comment>
<comment type="catalytic activity">
    <reaction>
        <text>Release of an N-terminal amino acid, Xaa-|-Yaa- from a peptide, amide or arylamide. Xaa is preferably Ala, but may be most amino acids including Pro (slow action). When a terminal hydrophobic residue is followed by a prolyl residue, the two may be released as an intact Xaa-Pro dipeptide.</text>
        <dbReference type="EC" id="3.4.11.2"/>
    </reaction>
</comment>
<comment type="cofactor">
    <cofactor evidence="1">
        <name>Zn(2+)</name>
        <dbReference type="ChEBI" id="CHEBI:29105"/>
    </cofactor>
    <text evidence="1">Binds 1 zinc ion per subunit.</text>
</comment>
<comment type="subunit">
    <text evidence="1">Monomer.</text>
</comment>
<comment type="subcellular location">
    <subcellularLocation>
        <location>Cytoplasm</location>
    </subcellularLocation>
</comment>
<comment type="similarity">
    <text evidence="3">Belongs to the peptidase M1 family.</text>
</comment>
<keyword id="KW-0031">Aminopeptidase</keyword>
<keyword id="KW-0963">Cytoplasm</keyword>
<keyword id="KW-0378">Hydrolase</keyword>
<keyword id="KW-0479">Metal-binding</keyword>
<keyword id="KW-0482">Metalloprotease</keyword>
<keyword id="KW-0645">Protease</keyword>
<keyword id="KW-0862">Zinc</keyword>
<proteinExistence type="inferred from homology"/>
<protein>
    <recommendedName>
        <fullName>Aminopeptidase N</fullName>
        <ecNumber>3.4.11.2</ecNumber>
    </recommendedName>
    <alternativeName>
        <fullName>Alanine aminopeptidase</fullName>
    </alternativeName>
    <alternativeName>
        <fullName>Lysyl aminopeptidase</fullName>
        <shortName>Lys-AP</shortName>
    </alternativeName>
</protein>
<evidence type="ECO:0000250" key="1"/>
<evidence type="ECO:0000255" key="2">
    <source>
        <dbReference type="PROSITE-ProRule" id="PRU10095"/>
    </source>
</evidence>
<evidence type="ECO:0000305" key="3"/>
<organism>
    <name type="scientific">Lactobacillus helveticus</name>
    <name type="common">Lactobacillus suntoryeus</name>
    <dbReference type="NCBI Taxonomy" id="1587"/>
    <lineage>
        <taxon>Bacteria</taxon>
        <taxon>Bacillati</taxon>
        <taxon>Bacillota</taxon>
        <taxon>Bacilli</taxon>
        <taxon>Lactobacillales</taxon>
        <taxon>Lactobacillaceae</taxon>
        <taxon>Lactobacillus</taxon>
    </lineage>
</organism>
<sequence>MAVKRFYKTFHPEHYDLRINVNRKNKTINGTSTITGDVFENPVLINQKFMTIDSVKVDGKNVDFDVIEKDEAIKIKTGVTGKAVIEIAYSAPLTDTMMGIYPSYYELEGKKKQIIGTQFETTFARQAFPCVDEPEAKATFSLALKWDEQDGEVALANMPEVEVDKDGYHHFEETVRMSSYLVAFAFGELQSKTTHTKDGVLIGVYATKAHKPKELDFALDIAKRAIEFYEEFYQTKYPLPQSLQLALPDFSAGAMENWGLVTYREAYLLLDPDNTSLEMKKLVATVITHELAHQWFGDLVTMKWWDNLWLNESFANMMEYLSVDGLEPDWHIWEMFQTSEASSALNRDATDGVQPIQMEINDPADIDSVFDSAIVYAKGSRMLVMVRSLLGDDALRKGLKYYFDHHKFGNATGDDLWDALSTATDLDIGKIMHSWLKQPGYPVVNAFVAEDGHLKLTQKQFFIGEGEDKGRQWQIPLNANFDAPKIMSDKEIDLGSYKVLREEAGHPLRLNVGNNSHFIVEYDKTLHDDILSDVNELDPIDKLQLLQDLRLLAEGKQISYASIVPLLVKFADSKSSLVINALYTTAAKLRQFVEPESNEEKNLKKLYDLLSKDQVARLGWEVKPGESDEDVQIRPYELSASLYAENADSIKAAHQIFTENEDNLEALNADIRPYVLINEVKNFGNAELVDKLIKEYQRTADPSYKVDLRSAVTSTKDLAAIKAIVGDFENADVVKPQDLCDWYRGLLANHYGQQAAWDWIREDWDWLDKTVGGDMEFAKFITVTAGVFHTPERLKEFKEFFEPKINVPLLSREIKMDVKVIESKVNLIEAEKDAVNDAVAKAID</sequence>